<feature type="chain" id="PRO_0000288752" description="Pyruvate dehydrogenase E1 component subunit alpha">
    <location>
        <begin position="1"/>
        <end position="326"/>
    </location>
</feature>
<organism>
    <name type="scientific">Rickettsia bellii (strain RML369-C)</name>
    <dbReference type="NCBI Taxonomy" id="336407"/>
    <lineage>
        <taxon>Bacteria</taxon>
        <taxon>Pseudomonadati</taxon>
        <taxon>Pseudomonadota</taxon>
        <taxon>Alphaproteobacteria</taxon>
        <taxon>Rickettsiales</taxon>
        <taxon>Rickettsiaceae</taxon>
        <taxon>Rickettsieae</taxon>
        <taxon>Rickettsia</taxon>
        <taxon>belli group</taxon>
    </lineage>
</organism>
<keyword id="KW-0560">Oxidoreductase</keyword>
<keyword id="KW-0670">Pyruvate</keyword>
<keyword id="KW-0786">Thiamine pyrophosphate</keyword>
<protein>
    <recommendedName>
        <fullName>Pyruvate dehydrogenase E1 component subunit alpha</fullName>
        <ecNumber>1.2.4.1</ecNumber>
    </recommendedName>
</protein>
<reference key="1">
    <citation type="journal article" date="2006" name="PLoS Genet.">
        <title>Genome sequence of Rickettsia bellii illuminates the role of amoebae in gene exchanges between intracellular pathogens.</title>
        <authorList>
            <person name="Ogata H."/>
            <person name="La Scola B."/>
            <person name="Audic S."/>
            <person name="Renesto P."/>
            <person name="Blanc G."/>
            <person name="Robert C."/>
            <person name="Fournier P.-E."/>
            <person name="Claverie J.-M."/>
            <person name="Raoult D."/>
        </authorList>
    </citation>
    <scope>NUCLEOTIDE SEQUENCE [LARGE SCALE GENOMIC DNA]</scope>
    <source>
        <strain>RML369-C</strain>
    </source>
</reference>
<comment type="function">
    <text evidence="1">The pyruvate dehydrogenase complex catalyzes the overall conversion of pyruvate to acetyl-CoA and CO(2). It contains multiple copies of three enzymatic components: pyruvate dehydrogenase (E1), dihydrolipoamide acetyltransferase (E2) and lipoamide dehydrogenase (E3) (By similarity).</text>
</comment>
<comment type="catalytic activity">
    <reaction>
        <text>N(6)-[(R)-lipoyl]-L-lysyl-[protein] + pyruvate + H(+) = N(6)-[(R)-S(8)-acetyldihydrolipoyl]-L-lysyl-[protein] + CO2</text>
        <dbReference type="Rhea" id="RHEA:19189"/>
        <dbReference type="Rhea" id="RHEA-COMP:10474"/>
        <dbReference type="Rhea" id="RHEA-COMP:10478"/>
        <dbReference type="ChEBI" id="CHEBI:15361"/>
        <dbReference type="ChEBI" id="CHEBI:15378"/>
        <dbReference type="ChEBI" id="CHEBI:16526"/>
        <dbReference type="ChEBI" id="CHEBI:83099"/>
        <dbReference type="ChEBI" id="CHEBI:83111"/>
        <dbReference type="EC" id="1.2.4.1"/>
    </reaction>
</comment>
<comment type="cofactor">
    <cofactor evidence="1">
        <name>thiamine diphosphate</name>
        <dbReference type="ChEBI" id="CHEBI:58937"/>
    </cofactor>
</comment>
<comment type="subunit">
    <text>Heterodimer of an alpha and a beta chain.</text>
</comment>
<sequence length="326" mass="36853">MDIKLGKYKPVKEEYIKSFKDMLLLRRFEEKCGQLYGMGEIGGFCHLYIGQEAVISAVDMVKQKEDSMVTSYRDHAHIILAGTEPKYVLAELMGRATGCSKGKGGSMHLFDVPNKFYGGHGIVGAQVPIGTGLAFAEKYNGTNNICFTFLGDGAVNQGQVYEAFNMAALWGLPVVYIIENNEYSMGTSVARSTFMRDLYKKGESFGIKGFQLNGMDFEEMYDGVKQAAEYVRENSMPLILEVKTYRYRGHSMSDPAKYRSKEEVETYKERDPITEIRKIILENNYASEADLKEIEQSVKEIVKEAVEFSENSPLPNEEELYTQIYV</sequence>
<evidence type="ECO:0000250" key="1"/>
<name>ODPA_RICBR</name>
<proteinExistence type="inferred from homology"/>
<accession>Q1RJX4</accession>
<dbReference type="EC" id="1.2.4.1"/>
<dbReference type="EMBL" id="CP000087">
    <property type="protein sequence ID" value="ABE04340.1"/>
    <property type="molecule type" value="Genomic_DNA"/>
</dbReference>
<dbReference type="RefSeq" id="WP_011476952.1">
    <property type="nucleotide sequence ID" value="NC_007940.1"/>
</dbReference>
<dbReference type="SMR" id="Q1RJX4"/>
<dbReference type="KEGG" id="rbe:RBE_0259"/>
<dbReference type="eggNOG" id="COG1071">
    <property type="taxonomic scope" value="Bacteria"/>
</dbReference>
<dbReference type="HOGENOM" id="CLU_029393_5_2_5"/>
<dbReference type="OrthoDB" id="9766715at2"/>
<dbReference type="Proteomes" id="UP000001951">
    <property type="component" value="Chromosome"/>
</dbReference>
<dbReference type="GO" id="GO:0043231">
    <property type="term" value="C:intracellular membrane-bounded organelle"/>
    <property type="evidence" value="ECO:0007669"/>
    <property type="project" value="InterPro"/>
</dbReference>
<dbReference type="GO" id="GO:0004739">
    <property type="term" value="F:pyruvate dehydrogenase (acetyl-transferring) activity"/>
    <property type="evidence" value="ECO:0007669"/>
    <property type="project" value="UniProtKB-EC"/>
</dbReference>
<dbReference type="GO" id="GO:0006086">
    <property type="term" value="P:pyruvate decarboxylation to acetyl-CoA"/>
    <property type="evidence" value="ECO:0007669"/>
    <property type="project" value="InterPro"/>
</dbReference>
<dbReference type="CDD" id="cd02000">
    <property type="entry name" value="TPP_E1_PDC_ADC_BCADC"/>
    <property type="match status" value="1"/>
</dbReference>
<dbReference type="FunFam" id="3.40.50.970:FF:000013">
    <property type="entry name" value="Pyruvate dehydrogenase E1 component subunit alpha"/>
    <property type="match status" value="1"/>
</dbReference>
<dbReference type="Gene3D" id="3.40.50.970">
    <property type="match status" value="1"/>
</dbReference>
<dbReference type="InterPro" id="IPR001017">
    <property type="entry name" value="DH_E1"/>
</dbReference>
<dbReference type="InterPro" id="IPR050642">
    <property type="entry name" value="PDH_E1_Alpha_Subunit"/>
</dbReference>
<dbReference type="InterPro" id="IPR017597">
    <property type="entry name" value="Pyrv_DH_E1_asu_subgrp-y"/>
</dbReference>
<dbReference type="InterPro" id="IPR029061">
    <property type="entry name" value="THDP-binding"/>
</dbReference>
<dbReference type="NCBIfam" id="TIGR03182">
    <property type="entry name" value="PDH_E1_alph_y"/>
    <property type="match status" value="1"/>
</dbReference>
<dbReference type="PANTHER" id="PTHR11516:SF60">
    <property type="entry name" value="PYRUVATE DEHYDROGENASE E1 COMPONENT SUBUNIT ALPHA"/>
    <property type="match status" value="1"/>
</dbReference>
<dbReference type="PANTHER" id="PTHR11516">
    <property type="entry name" value="PYRUVATE DEHYDROGENASE E1 COMPONENT, ALPHA SUBUNIT BACTERIAL AND ORGANELLAR"/>
    <property type="match status" value="1"/>
</dbReference>
<dbReference type="Pfam" id="PF00676">
    <property type="entry name" value="E1_dh"/>
    <property type="match status" value="1"/>
</dbReference>
<dbReference type="SUPFAM" id="SSF52518">
    <property type="entry name" value="Thiamin diphosphate-binding fold (THDP-binding)"/>
    <property type="match status" value="1"/>
</dbReference>
<gene>
    <name type="primary">pdhA</name>
    <name type="ordered locus">RBE_0259</name>
</gene>